<gene>
    <name type="primary">recX</name>
    <name type="ordered locus">DR_1310</name>
</gene>
<organism>
    <name type="scientific">Deinococcus radiodurans (strain ATCC 13939 / DSM 20539 / JCM 16871 / CCUG 27074 / LMG 4051 / NBRC 15346 / NCIMB 9279 / VKM B-1422 / R1)</name>
    <dbReference type="NCBI Taxonomy" id="243230"/>
    <lineage>
        <taxon>Bacteria</taxon>
        <taxon>Thermotogati</taxon>
        <taxon>Deinococcota</taxon>
        <taxon>Deinococci</taxon>
        <taxon>Deinococcales</taxon>
        <taxon>Deinococcaceae</taxon>
        <taxon>Deinococcus</taxon>
    </lineage>
</organism>
<dbReference type="EMBL" id="AE000513">
    <property type="protein sequence ID" value="AAF10882.1"/>
    <property type="molecule type" value="Genomic_DNA"/>
</dbReference>
<dbReference type="PIR" id="B75410">
    <property type="entry name" value="B75410"/>
</dbReference>
<dbReference type="RefSeq" id="NP_295034.1">
    <property type="nucleotide sequence ID" value="NC_001263.1"/>
</dbReference>
<dbReference type="SMR" id="Q9RUS2"/>
<dbReference type="FunCoup" id="Q9RUS2">
    <property type="interactions" value="4"/>
</dbReference>
<dbReference type="STRING" id="243230.DR_1310"/>
<dbReference type="PaxDb" id="243230-DR_1310"/>
<dbReference type="EnsemblBacteria" id="AAF10882">
    <property type="protein sequence ID" value="AAF10882"/>
    <property type="gene ID" value="DR_1310"/>
</dbReference>
<dbReference type="KEGG" id="dra:DR_1310"/>
<dbReference type="PATRIC" id="fig|243230.17.peg.1504"/>
<dbReference type="eggNOG" id="COG2137">
    <property type="taxonomic scope" value="Bacteria"/>
</dbReference>
<dbReference type="HOGENOM" id="CLU_066607_3_3_0"/>
<dbReference type="InParanoid" id="Q9RUS2"/>
<dbReference type="OrthoDB" id="68219at2"/>
<dbReference type="Proteomes" id="UP000002524">
    <property type="component" value="Chromosome 1"/>
</dbReference>
<dbReference type="GO" id="GO:0005737">
    <property type="term" value="C:cytoplasm"/>
    <property type="evidence" value="ECO:0007669"/>
    <property type="project" value="UniProtKB-SubCell"/>
</dbReference>
<dbReference type="GO" id="GO:0006282">
    <property type="term" value="P:regulation of DNA repair"/>
    <property type="evidence" value="ECO:0007669"/>
    <property type="project" value="UniProtKB-UniRule"/>
</dbReference>
<dbReference type="Gene3D" id="1.10.10.10">
    <property type="entry name" value="Winged helix-like DNA-binding domain superfamily/Winged helix DNA-binding domain"/>
    <property type="match status" value="3"/>
</dbReference>
<dbReference type="HAMAP" id="MF_01114">
    <property type="entry name" value="RecX"/>
    <property type="match status" value="1"/>
</dbReference>
<dbReference type="InterPro" id="IPR053925">
    <property type="entry name" value="RecX_HTH_3rd"/>
</dbReference>
<dbReference type="InterPro" id="IPR003783">
    <property type="entry name" value="Regulatory_RecX"/>
</dbReference>
<dbReference type="InterPro" id="IPR036388">
    <property type="entry name" value="WH-like_DNA-bd_sf"/>
</dbReference>
<dbReference type="NCBIfam" id="NF010735">
    <property type="entry name" value="PRK14137.1"/>
    <property type="match status" value="1"/>
</dbReference>
<dbReference type="PANTHER" id="PTHR33602">
    <property type="entry name" value="REGULATORY PROTEIN RECX FAMILY PROTEIN"/>
    <property type="match status" value="1"/>
</dbReference>
<dbReference type="PANTHER" id="PTHR33602:SF1">
    <property type="entry name" value="REGULATORY PROTEIN RECX FAMILY PROTEIN"/>
    <property type="match status" value="1"/>
</dbReference>
<dbReference type="Pfam" id="PF21981">
    <property type="entry name" value="RecX_HTH3"/>
    <property type="match status" value="1"/>
</dbReference>
<accession>Q9RUS2</accession>
<feature type="chain" id="PRO_0000162428" description="Regulatory protein RecX">
    <location>
        <begin position="1"/>
        <end position="204"/>
    </location>
</feature>
<feature type="region of interest" description="Disordered" evidence="2">
    <location>
        <begin position="1"/>
        <end position="51"/>
    </location>
</feature>
<feature type="compositionally biased region" description="Basic and acidic residues" evidence="2">
    <location>
        <begin position="39"/>
        <end position="51"/>
    </location>
</feature>
<comment type="function">
    <text evidence="1">Modulates RecA activity.</text>
</comment>
<comment type="subcellular location">
    <subcellularLocation>
        <location evidence="3">Cytoplasm</location>
    </subcellularLocation>
</comment>
<comment type="similarity">
    <text evidence="3">Belongs to the RecX family.</text>
</comment>
<keyword id="KW-0963">Cytoplasm</keyword>
<keyword id="KW-1185">Reference proteome</keyword>
<evidence type="ECO:0000250" key="1"/>
<evidence type="ECO:0000256" key="2">
    <source>
        <dbReference type="SAM" id="MobiDB-lite"/>
    </source>
</evidence>
<evidence type="ECO:0000305" key="3"/>
<reference key="1">
    <citation type="journal article" date="1999" name="Science">
        <title>Genome sequence of the radioresistant bacterium Deinococcus radiodurans R1.</title>
        <authorList>
            <person name="White O."/>
            <person name="Eisen J.A."/>
            <person name="Heidelberg J.F."/>
            <person name="Hickey E.K."/>
            <person name="Peterson J.D."/>
            <person name="Dodson R.J."/>
            <person name="Haft D.H."/>
            <person name="Gwinn M.L."/>
            <person name="Nelson W.C."/>
            <person name="Richardson D.L."/>
            <person name="Moffat K.S."/>
            <person name="Qin H."/>
            <person name="Jiang L."/>
            <person name="Pamphile W."/>
            <person name="Crosby M."/>
            <person name="Shen M."/>
            <person name="Vamathevan J.J."/>
            <person name="Lam P."/>
            <person name="McDonald L.A."/>
            <person name="Utterback T.R."/>
            <person name="Zalewski C."/>
            <person name="Makarova K.S."/>
            <person name="Aravind L."/>
            <person name="Daly M.J."/>
            <person name="Minton K.W."/>
            <person name="Fleischmann R.D."/>
            <person name="Ketchum K.A."/>
            <person name="Nelson K.E."/>
            <person name="Salzberg S.L."/>
            <person name="Smith H.O."/>
            <person name="Venter J.C."/>
            <person name="Fraser C.M."/>
        </authorList>
    </citation>
    <scope>NUCLEOTIDE SEQUENCE [LARGE SCALE GENOMIC DNA]</scope>
    <source>
        <strain>ATCC 13939 / DSM 20539 / JCM 16871 / CCUG 27074 / LMG 4051 / NBRC 15346 / NCIMB 9279 / VKM B-1422 / R1</strain>
    </source>
</reference>
<protein>
    <recommendedName>
        <fullName>Regulatory protein RecX</fullName>
    </recommendedName>
</protein>
<sequence>MPVCGRRPWQVKRSSSGGILPVMYRPRRRSSTPASEGEAEPRPRRPKTREEQREALLAYAFRALGARAITEAELRGKLERRSEDPELVEEVLRRVQELGYQNDAEVARAENKRRGVGELRVRQTLRRRGLGADLIEETLQARDPEEEQQQAIDLLTKRWPALSRKRDPRASAYAFLARRGFGGSVIWPAIREVAELFPPDEAEE</sequence>
<name>RECX_DEIRA</name>
<proteinExistence type="inferred from homology"/>